<name>RK22_ARAHI</name>
<proteinExistence type="inferred from homology"/>
<comment type="function">
    <text evidence="1">This protein binds specifically to 23S rRNA.</text>
</comment>
<comment type="function">
    <text evidence="1">The globular domain of the protein is located near the polypeptide exit tunnel on the outside of the subunit, while an extended beta-hairpin is found that lines the wall of the exit tunnel in the center of the 70S ribosome.</text>
</comment>
<comment type="subunit">
    <text evidence="1">Part of the 50S ribosomal subunit.</text>
</comment>
<comment type="subcellular location">
    <subcellularLocation>
        <location>Plastid</location>
        <location>Chloroplast</location>
    </subcellularLocation>
</comment>
<comment type="similarity">
    <text evidence="2">Belongs to the universal ribosomal protein uL22 family.</text>
</comment>
<gene>
    <name type="primary">rpl22</name>
</gene>
<dbReference type="EMBL" id="AP009369">
    <property type="protein sequence ID" value="BAF50062.1"/>
    <property type="molecule type" value="Genomic_DNA"/>
</dbReference>
<dbReference type="RefSeq" id="YP_001123238.1">
    <property type="nucleotide sequence ID" value="NC_009268.1"/>
</dbReference>
<dbReference type="SMR" id="A4QK57"/>
<dbReference type="GeneID" id="4962559"/>
<dbReference type="GO" id="GO:0009507">
    <property type="term" value="C:chloroplast"/>
    <property type="evidence" value="ECO:0007669"/>
    <property type="project" value="UniProtKB-SubCell"/>
</dbReference>
<dbReference type="GO" id="GO:0015934">
    <property type="term" value="C:large ribosomal subunit"/>
    <property type="evidence" value="ECO:0007669"/>
    <property type="project" value="InterPro"/>
</dbReference>
<dbReference type="GO" id="GO:0019843">
    <property type="term" value="F:rRNA binding"/>
    <property type="evidence" value="ECO:0007669"/>
    <property type="project" value="UniProtKB-UniRule"/>
</dbReference>
<dbReference type="GO" id="GO:0003735">
    <property type="term" value="F:structural constituent of ribosome"/>
    <property type="evidence" value="ECO:0007669"/>
    <property type="project" value="InterPro"/>
</dbReference>
<dbReference type="GO" id="GO:0006412">
    <property type="term" value="P:translation"/>
    <property type="evidence" value="ECO:0007669"/>
    <property type="project" value="UniProtKB-UniRule"/>
</dbReference>
<dbReference type="CDD" id="cd00336">
    <property type="entry name" value="Ribosomal_L22"/>
    <property type="match status" value="1"/>
</dbReference>
<dbReference type="FunFam" id="3.90.470.10:FF:000006">
    <property type="entry name" value="50S ribosomal protein L22, chloroplastic"/>
    <property type="match status" value="1"/>
</dbReference>
<dbReference type="Gene3D" id="3.90.470.10">
    <property type="entry name" value="Ribosomal protein L22/L17"/>
    <property type="match status" value="1"/>
</dbReference>
<dbReference type="HAMAP" id="MF_01331_B">
    <property type="entry name" value="Ribosomal_uL22_B"/>
    <property type="match status" value="1"/>
</dbReference>
<dbReference type="InterPro" id="IPR001063">
    <property type="entry name" value="Ribosomal_uL22"/>
</dbReference>
<dbReference type="InterPro" id="IPR005727">
    <property type="entry name" value="Ribosomal_uL22_bac/chlpt-type"/>
</dbReference>
<dbReference type="InterPro" id="IPR047867">
    <property type="entry name" value="Ribosomal_uL22_bac/org-type"/>
</dbReference>
<dbReference type="InterPro" id="IPR018260">
    <property type="entry name" value="Ribosomal_uL22_CS"/>
</dbReference>
<dbReference type="InterPro" id="IPR036394">
    <property type="entry name" value="Ribosomal_uL22_sf"/>
</dbReference>
<dbReference type="NCBIfam" id="TIGR01044">
    <property type="entry name" value="rplV_bact"/>
    <property type="match status" value="1"/>
</dbReference>
<dbReference type="PANTHER" id="PTHR13501">
    <property type="entry name" value="CHLOROPLAST 50S RIBOSOMAL PROTEIN L22-RELATED"/>
    <property type="match status" value="1"/>
</dbReference>
<dbReference type="PANTHER" id="PTHR13501:SF10">
    <property type="entry name" value="LARGE RIBOSOMAL SUBUNIT PROTEIN UL22M"/>
    <property type="match status" value="1"/>
</dbReference>
<dbReference type="Pfam" id="PF00237">
    <property type="entry name" value="Ribosomal_L22"/>
    <property type="match status" value="1"/>
</dbReference>
<dbReference type="SUPFAM" id="SSF54843">
    <property type="entry name" value="Ribosomal protein L22"/>
    <property type="match status" value="1"/>
</dbReference>
<dbReference type="PROSITE" id="PS00464">
    <property type="entry name" value="RIBOSOMAL_L22"/>
    <property type="match status" value="1"/>
</dbReference>
<organism>
    <name type="scientific">Arabis hirsuta</name>
    <name type="common">Hairy rock-cress</name>
    <name type="synonym">Turritis hirsuta</name>
    <dbReference type="NCBI Taxonomy" id="78191"/>
    <lineage>
        <taxon>Eukaryota</taxon>
        <taxon>Viridiplantae</taxon>
        <taxon>Streptophyta</taxon>
        <taxon>Embryophyta</taxon>
        <taxon>Tracheophyta</taxon>
        <taxon>Spermatophyta</taxon>
        <taxon>Magnoliopsida</taxon>
        <taxon>eudicotyledons</taxon>
        <taxon>Gunneridae</taxon>
        <taxon>Pentapetalae</taxon>
        <taxon>rosids</taxon>
        <taxon>malvids</taxon>
        <taxon>Brassicales</taxon>
        <taxon>Brassicaceae</taxon>
        <taxon>Arabideae</taxon>
        <taxon>Arabis</taxon>
    </lineage>
</organism>
<reference key="1">
    <citation type="submission" date="2007-03" db="EMBL/GenBank/DDBJ databases">
        <title>Sequencing analysis of Arabis hirsuta chloroplast DNA.</title>
        <authorList>
            <person name="Hosouchi T."/>
            <person name="Tsuruoka H."/>
            <person name="Kotani H."/>
        </authorList>
    </citation>
    <scope>NUCLEOTIDE SEQUENCE [LARGE SCALE GENOMIC DNA]</scope>
</reference>
<geneLocation type="chloroplast"/>
<keyword id="KW-0150">Chloroplast</keyword>
<keyword id="KW-0934">Plastid</keyword>
<keyword id="KW-0687">Ribonucleoprotein</keyword>
<keyword id="KW-0689">Ribosomal protein</keyword>
<keyword id="KW-0694">RNA-binding</keyword>
<keyword id="KW-0699">rRNA-binding</keyword>
<evidence type="ECO:0000250" key="1"/>
<evidence type="ECO:0000305" key="2"/>
<protein>
    <recommendedName>
        <fullName evidence="2">Large ribosomal subunit protein uL22c</fullName>
    </recommendedName>
    <alternativeName>
        <fullName>50S ribosomal protein L22, chloroplastic</fullName>
    </alternativeName>
</protein>
<accession>A4QK57</accession>
<sequence length="160" mass="18550">MIKNKKQKSYTSVYALGQYISMSAHKARRVIDQIRGRSYEEALMILELMPYRGCYPIFKLVYSAAANASHNKGFKETNLVISKAEVNQGNTVKKLKPRARGRSYPIKRSTCHITIVLEDTSFYQQYEEYLMYLKKPGYSNENRNLTCYDTYSSGGLWDKK</sequence>
<feature type="chain" id="PRO_0000354556" description="Large ribosomal subunit protein uL22c">
    <location>
        <begin position="1"/>
        <end position="160"/>
    </location>
</feature>